<protein>
    <recommendedName>
        <fullName evidence="1">3-dehydroquinate dehydratase</fullName>
        <shortName evidence="1">3-dehydroquinase</shortName>
        <ecNumber evidence="1">4.2.1.10</ecNumber>
    </recommendedName>
    <alternativeName>
        <fullName evidence="1">Type II DHQase</fullName>
    </alternativeName>
</protein>
<proteinExistence type="inferred from homology"/>
<sequence>MNNILVINGPNLNLLGKREPDIYGNITLENINQKIKLHFKNEDLRIDFFQSNEEGKIIDRIIESEKKYNAIVINPAAYSHYSIAILDAMRSINIPVVEVHLSNIYKREEYRKKSVTAEASLGVISGFGYYGYIMAIEFILNNLSIGK</sequence>
<dbReference type="EC" id="4.2.1.10" evidence="1"/>
<dbReference type="EMBL" id="CP000962">
    <property type="protein sequence ID" value="ACA54808.1"/>
    <property type="molecule type" value="Genomic_DNA"/>
</dbReference>
<dbReference type="RefSeq" id="WP_012342864.1">
    <property type="nucleotide sequence ID" value="NC_010520.1"/>
</dbReference>
<dbReference type="SMR" id="B1KT66"/>
<dbReference type="KEGG" id="cbl:CLK_1288"/>
<dbReference type="HOGENOM" id="CLU_090968_2_0_9"/>
<dbReference type="UniPathway" id="UPA00053">
    <property type="reaction ID" value="UER00086"/>
</dbReference>
<dbReference type="GO" id="GO:0003855">
    <property type="term" value="F:3-dehydroquinate dehydratase activity"/>
    <property type="evidence" value="ECO:0007669"/>
    <property type="project" value="UniProtKB-UniRule"/>
</dbReference>
<dbReference type="GO" id="GO:0008652">
    <property type="term" value="P:amino acid biosynthetic process"/>
    <property type="evidence" value="ECO:0007669"/>
    <property type="project" value="UniProtKB-KW"/>
</dbReference>
<dbReference type="GO" id="GO:0009073">
    <property type="term" value="P:aromatic amino acid family biosynthetic process"/>
    <property type="evidence" value="ECO:0007669"/>
    <property type="project" value="UniProtKB-KW"/>
</dbReference>
<dbReference type="GO" id="GO:0009423">
    <property type="term" value="P:chorismate biosynthetic process"/>
    <property type="evidence" value="ECO:0007669"/>
    <property type="project" value="UniProtKB-UniRule"/>
</dbReference>
<dbReference type="GO" id="GO:0019631">
    <property type="term" value="P:quinate catabolic process"/>
    <property type="evidence" value="ECO:0007669"/>
    <property type="project" value="TreeGrafter"/>
</dbReference>
<dbReference type="CDD" id="cd00466">
    <property type="entry name" value="DHQase_II"/>
    <property type="match status" value="1"/>
</dbReference>
<dbReference type="Gene3D" id="3.40.50.9100">
    <property type="entry name" value="Dehydroquinase, class II"/>
    <property type="match status" value="1"/>
</dbReference>
<dbReference type="HAMAP" id="MF_00169">
    <property type="entry name" value="AroQ"/>
    <property type="match status" value="1"/>
</dbReference>
<dbReference type="InterPro" id="IPR001874">
    <property type="entry name" value="DHquinase_II"/>
</dbReference>
<dbReference type="InterPro" id="IPR018509">
    <property type="entry name" value="DHquinase_II_CS"/>
</dbReference>
<dbReference type="InterPro" id="IPR036441">
    <property type="entry name" value="DHquinase_II_sf"/>
</dbReference>
<dbReference type="NCBIfam" id="TIGR01088">
    <property type="entry name" value="aroQ"/>
    <property type="match status" value="1"/>
</dbReference>
<dbReference type="NCBIfam" id="NF003805">
    <property type="entry name" value="PRK05395.1-2"/>
    <property type="match status" value="1"/>
</dbReference>
<dbReference type="NCBIfam" id="NF003806">
    <property type="entry name" value="PRK05395.1-3"/>
    <property type="match status" value="1"/>
</dbReference>
<dbReference type="NCBIfam" id="NF003807">
    <property type="entry name" value="PRK05395.1-4"/>
    <property type="match status" value="1"/>
</dbReference>
<dbReference type="PANTHER" id="PTHR21272">
    <property type="entry name" value="CATABOLIC 3-DEHYDROQUINASE"/>
    <property type="match status" value="1"/>
</dbReference>
<dbReference type="PANTHER" id="PTHR21272:SF3">
    <property type="entry name" value="CATABOLIC 3-DEHYDROQUINASE"/>
    <property type="match status" value="1"/>
</dbReference>
<dbReference type="Pfam" id="PF01220">
    <property type="entry name" value="DHquinase_II"/>
    <property type="match status" value="1"/>
</dbReference>
<dbReference type="PIRSF" id="PIRSF001399">
    <property type="entry name" value="DHquinase_II"/>
    <property type="match status" value="1"/>
</dbReference>
<dbReference type="SUPFAM" id="SSF52304">
    <property type="entry name" value="Type II 3-dehydroquinate dehydratase"/>
    <property type="match status" value="1"/>
</dbReference>
<dbReference type="PROSITE" id="PS01029">
    <property type="entry name" value="DEHYDROQUINASE_II"/>
    <property type="match status" value="1"/>
</dbReference>
<accession>B1KT66</accession>
<gene>
    <name evidence="1" type="primary">aroQ</name>
    <name type="ordered locus">CLK_1288</name>
</gene>
<keyword id="KW-0028">Amino-acid biosynthesis</keyword>
<keyword id="KW-0057">Aromatic amino acid biosynthesis</keyword>
<keyword id="KW-0456">Lyase</keyword>
<comment type="function">
    <text evidence="1">Catalyzes a trans-dehydration via an enolate intermediate.</text>
</comment>
<comment type="catalytic activity">
    <reaction evidence="1">
        <text>3-dehydroquinate = 3-dehydroshikimate + H2O</text>
        <dbReference type="Rhea" id="RHEA:21096"/>
        <dbReference type="ChEBI" id="CHEBI:15377"/>
        <dbReference type="ChEBI" id="CHEBI:16630"/>
        <dbReference type="ChEBI" id="CHEBI:32364"/>
        <dbReference type="EC" id="4.2.1.10"/>
    </reaction>
</comment>
<comment type="pathway">
    <text evidence="1">Metabolic intermediate biosynthesis; chorismate biosynthesis; chorismate from D-erythrose 4-phosphate and phosphoenolpyruvate: step 3/7.</text>
</comment>
<comment type="subunit">
    <text evidence="1">Homododecamer.</text>
</comment>
<comment type="similarity">
    <text evidence="1">Belongs to the type-II 3-dehydroquinase family.</text>
</comment>
<name>AROQ_CLOBM</name>
<feature type="chain" id="PRO_1000203672" description="3-dehydroquinate dehydratase">
    <location>
        <begin position="1"/>
        <end position="147"/>
    </location>
</feature>
<feature type="active site" description="Proton acceptor" evidence="1">
    <location>
        <position position="23"/>
    </location>
</feature>
<feature type="active site" description="Proton donor" evidence="1">
    <location>
        <position position="100"/>
    </location>
</feature>
<feature type="binding site" evidence="1">
    <location>
        <position position="74"/>
    </location>
    <ligand>
        <name>substrate</name>
    </ligand>
</feature>
<feature type="binding site" evidence="1">
    <location>
        <position position="80"/>
    </location>
    <ligand>
        <name>substrate</name>
    </ligand>
</feature>
<feature type="binding site" evidence="1">
    <location>
        <position position="87"/>
    </location>
    <ligand>
        <name>substrate</name>
    </ligand>
</feature>
<feature type="binding site" evidence="1">
    <location>
        <begin position="101"/>
        <end position="102"/>
    </location>
    <ligand>
        <name>substrate</name>
    </ligand>
</feature>
<feature type="binding site" evidence="1">
    <location>
        <position position="111"/>
    </location>
    <ligand>
        <name>substrate</name>
    </ligand>
</feature>
<feature type="site" description="Transition state stabilizer" evidence="1">
    <location>
        <position position="18"/>
    </location>
</feature>
<organism>
    <name type="scientific">Clostridium botulinum (strain Loch Maree / Type A3)</name>
    <dbReference type="NCBI Taxonomy" id="498214"/>
    <lineage>
        <taxon>Bacteria</taxon>
        <taxon>Bacillati</taxon>
        <taxon>Bacillota</taxon>
        <taxon>Clostridia</taxon>
        <taxon>Eubacteriales</taxon>
        <taxon>Clostridiaceae</taxon>
        <taxon>Clostridium</taxon>
    </lineage>
</organism>
<reference key="1">
    <citation type="journal article" date="2007" name="PLoS ONE">
        <title>Analysis of the neurotoxin complex genes in Clostridium botulinum A1-A4 and B1 strains: BoNT/A3, /Ba4 and /B1 clusters are located within plasmids.</title>
        <authorList>
            <person name="Smith T.J."/>
            <person name="Hill K.K."/>
            <person name="Foley B.T."/>
            <person name="Detter J.C."/>
            <person name="Munk A.C."/>
            <person name="Bruce D.C."/>
            <person name="Doggett N.A."/>
            <person name="Smith L.A."/>
            <person name="Marks J.D."/>
            <person name="Xie G."/>
            <person name="Brettin T.S."/>
        </authorList>
    </citation>
    <scope>NUCLEOTIDE SEQUENCE [LARGE SCALE GENOMIC DNA]</scope>
    <source>
        <strain>Loch Maree / Type A3</strain>
    </source>
</reference>
<evidence type="ECO:0000255" key="1">
    <source>
        <dbReference type="HAMAP-Rule" id="MF_00169"/>
    </source>
</evidence>